<comment type="similarity">
    <text evidence="2">Belongs to the heat shock protein 70 family.</text>
</comment>
<sequence>ERTMTKDNNLLGKFELSGIPPAPRGVPQIEVTFDIDANGILNVSAVDKATGKENKITITNDKGRLSKEEIDRMINEADRYKSEDEKQKNRICAKNSLESYVYSMKQSVEGDEMKDKISESDRKNRILSKCEETIRWMDNNQLAEKEEFEEKKSELEKVCMPIITAMNRAGGGVPSGMPGGMPGAGGGGGKGPTIEEVD</sequence>
<organism>
    <name type="scientific">Schistosoma japonicum</name>
    <name type="common">Blood fluke</name>
    <dbReference type="NCBI Taxonomy" id="6182"/>
    <lineage>
        <taxon>Eukaryota</taxon>
        <taxon>Metazoa</taxon>
        <taxon>Spiralia</taxon>
        <taxon>Lophotrochozoa</taxon>
        <taxon>Platyhelminthes</taxon>
        <taxon>Trematoda</taxon>
        <taxon>Digenea</taxon>
        <taxon>Strigeidida</taxon>
        <taxon>Schistosomatoidea</taxon>
        <taxon>Schistosomatidae</taxon>
        <taxon>Schistosoma</taxon>
    </lineage>
</organism>
<name>HSP70_SCHJA</name>
<dbReference type="EMBL" id="M21011">
    <property type="protein sequence ID" value="AAA29897.1"/>
    <property type="molecule type" value="mRNA"/>
</dbReference>
<dbReference type="PIR" id="A54507">
    <property type="entry name" value="A54507"/>
</dbReference>
<dbReference type="SMR" id="P12795"/>
<dbReference type="GO" id="GO:0005524">
    <property type="term" value="F:ATP binding"/>
    <property type="evidence" value="ECO:0007669"/>
    <property type="project" value="UniProtKB-KW"/>
</dbReference>
<dbReference type="GO" id="GO:0140662">
    <property type="term" value="F:ATP-dependent protein folding chaperone"/>
    <property type="evidence" value="ECO:0007669"/>
    <property type="project" value="InterPro"/>
</dbReference>
<dbReference type="FunFam" id="1.20.1270.10:FF:000024">
    <property type="entry name" value="Heat shock protein 70"/>
    <property type="match status" value="1"/>
</dbReference>
<dbReference type="FunFam" id="2.60.34.10:FF:000056">
    <property type="entry name" value="Protein CBG18239"/>
    <property type="match status" value="1"/>
</dbReference>
<dbReference type="Gene3D" id="1.20.1270.10">
    <property type="match status" value="1"/>
</dbReference>
<dbReference type="Gene3D" id="2.60.34.10">
    <property type="entry name" value="Substrate Binding Domain Of DNAk, Chain A, domain 1"/>
    <property type="match status" value="1"/>
</dbReference>
<dbReference type="InterPro" id="IPR029048">
    <property type="entry name" value="HSP70_C_sf"/>
</dbReference>
<dbReference type="InterPro" id="IPR029047">
    <property type="entry name" value="HSP70_peptide-bd_sf"/>
</dbReference>
<dbReference type="InterPro" id="IPR013126">
    <property type="entry name" value="Hsp_70_fam"/>
</dbReference>
<dbReference type="PANTHER" id="PTHR19375">
    <property type="entry name" value="HEAT SHOCK PROTEIN 70KDA"/>
    <property type="match status" value="1"/>
</dbReference>
<dbReference type="Pfam" id="PF00012">
    <property type="entry name" value="HSP70"/>
    <property type="match status" value="1"/>
</dbReference>
<dbReference type="SUPFAM" id="SSF100934">
    <property type="entry name" value="Heat shock protein 70kD (HSP70), C-terminal subdomain"/>
    <property type="match status" value="1"/>
</dbReference>
<dbReference type="SUPFAM" id="SSF100920">
    <property type="entry name" value="Heat shock protein 70kD (HSP70), peptide-binding domain"/>
    <property type="match status" value="1"/>
</dbReference>
<feature type="chain" id="PRO_0000078318" description="Heat shock 70 kDa protein">
    <location>
        <begin position="1" status="less than"/>
        <end position="198"/>
    </location>
</feature>
<feature type="region of interest" description="Disordered" evidence="1">
    <location>
        <begin position="170"/>
        <end position="198"/>
    </location>
</feature>
<feature type="compositionally biased region" description="Gly residues" evidence="1">
    <location>
        <begin position="170"/>
        <end position="191"/>
    </location>
</feature>
<feature type="non-terminal residue">
    <location>
        <position position="1"/>
    </location>
</feature>
<proteinExistence type="evidence at transcript level"/>
<accession>P12795</accession>
<reference key="1">
    <citation type="journal article" date="1988" name="Mol. Biochem. Parasitol.">
        <title>Schistosome heat-shock proteins are immunologically distinct host-like antigens.</title>
        <authorList>
            <person name="Hedstrom R."/>
            <person name="Culpepper J."/>
            <person name="Schinski V."/>
            <person name="Agabian N."/>
            <person name="Newport G."/>
        </authorList>
    </citation>
    <scope>NUCLEOTIDE SEQUENCE [MRNA]</scope>
</reference>
<evidence type="ECO:0000256" key="1">
    <source>
        <dbReference type="SAM" id="MobiDB-lite"/>
    </source>
</evidence>
<evidence type="ECO:0000305" key="2"/>
<keyword id="KW-0067">ATP-binding</keyword>
<keyword id="KW-0547">Nucleotide-binding</keyword>
<keyword id="KW-0346">Stress response</keyword>
<protein>
    <recommendedName>
        <fullName>Heat shock 70 kDa protein</fullName>
        <shortName>HSP70</shortName>
    </recommendedName>
</protein>